<organism>
    <name type="scientific">Vibrio parahaemolyticus serotype O3:K6 (strain RIMD 2210633)</name>
    <dbReference type="NCBI Taxonomy" id="223926"/>
    <lineage>
        <taxon>Bacteria</taxon>
        <taxon>Pseudomonadati</taxon>
        <taxon>Pseudomonadota</taxon>
        <taxon>Gammaproteobacteria</taxon>
        <taxon>Vibrionales</taxon>
        <taxon>Vibrionaceae</taxon>
        <taxon>Vibrio</taxon>
    </lineage>
</organism>
<protein>
    <recommendedName>
        <fullName evidence="1">Ribose-phosphate pyrophosphokinase</fullName>
        <shortName evidence="1">RPPK</shortName>
        <ecNumber evidence="1">2.7.6.1</ecNumber>
    </recommendedName>
    <alternativeName>
        <fullName evidence="1">5-phospho-D-ribosyl alpha-1-diphosphate synthase</fullName>
    </alternativeName>
    <alternativeName>
        <fullName evidence="1">Phosphoribosyl diphosphate synthase</fullName>
    </alternativeName>
    <alternativeName>
        <fullName evidence="1">Phosphoribosyl pyrophosphate synthase</fullName>
        <shortName evidence="1">P-Rib-PP synthase</shortName>
        <shortName evidence="1">PRPP synthase</shortName>
        <shortName evidence="1">PRPPase</shortName>
    </alternativeName>
</protein>
<sequence>MPDMKLFAGNATPELAQRIADRLYISLGDASVSRFSDGEVAVQINENVRGSDVFIIQSTCAPTNDNLMELVVMIDAMRRASAGRITAVIPYFGYARQDRRVRSARVPITAKVVADFLSNVGVDRVLTIDLHAEQIQGFFDVPVDNIFGTPVLLEDMQSRGLDNPVVVSPDLGGVVRARATAKALGDIDIAIVDKRRPRANVSEVMNLIGDVEGRDCVIVDDMIDTGGTLCKAAEALKERGAKRVFAYATHAVFSGNAADNIKNSVLDQVIVTDSISLSKEMAATGKVTTLSLSRMLAEAIRRISNEESISAMFN</sequence>
<reference key="1">
    <citation type="journal article" date="2003" name="Lancet">
        <title>Genome sequence of Vibrio parahaemolyticus: a pathogenic mechanism distinct from that of V. cholerae.</title>
        <authorList>
            <person name="Makino K."/>
            <person name="Oshima K."/>
            <person name="Kurokawa K."/>
            <person name="Yokoyama K."/>
            <person name="Uda T."/>
            <person name="Tagomori K."/>
            <person name="Iijima Y."/>
            <person name="Najima M."/>
            <person name="Nakano M."/>
            <person name="Yamashita A."/>
            <person name="Kubota Y."/>
            <person name="Kimura S."/>
            <person name="Yasunaga T."/>
            <person name="Honda T."/>
            <person name="Shinagawa H."/>
            <person name="Hattori M."/>
            <person name="Iida T."/>
        </authorList>
    </citation>
    <scope>NUCLEOTIDE SEQUENCE [LARGE SCALE GENOMIC DNA]</scope>
    <source>
        <strain>RIMD 2210633</strain>
    </source>
</reference>
<keyword id="KW-0067">ATP-binding</keyword>
<keyword id="KW-0963">Cytoplasm</keyword>
<keyword id="KW-0418">Kinase</keyword>
<keyword id="KW-0460">Magnesium</keyword>
<keyword id="KW-0479">Metal-binding</keyword>
<keyword id="KW-0545">Nucleotide biosynthesis</keyword>
<keyword id="KW-0547">Nucleotide-binding</keyword>
<keyword id="KW-0808">Transferase</keyword>
<feature type="chain" id="PRO_0000141223" description="Ribose-phosphate pyrophosphokinase">
    <location>
        <begin position="1"/>
        <end position="314"/>
    </location>
</feature>
<feature type="active site" evidence="1">
    <location>
        <position position="194"/>
    </location>
</feature>
<feature type="binding site" evidence="1">
    <location>
        <begin position="37"/>
        <end position="39"/>
    </location>
    <ligand>
        <name>ATP</name>
        <dbReference type="ChEBI" id="CHEBI:30616"/>
    </ligand>
</feature>
<feature type="binding site" evidence="1">
    <location>
        <begin position="96"/>
        <end position="97"/>
    </location>
    <ligand>
        <name>ATP</name>
        <dbReference type="ChEBI" id="CHEBI:30616"/>
    </ligand>
</feature>
<feature type="binding site" evidence="1">
    <location>
        <position position="131"/>
    </location>
    <ligand>
        <name>Mg(2+)</name>
        <dbReference type="ChEBI" id="CHEBI:18420"/>
        <label>1</label>
    </ligand>
</feature>
<feature type="binding site" evidence="1">
    <location>
        <position position="170"/>
    </location>
    <ligand>
        <name>Mg(2+)</name>
        <dbReference type="ChEBI" id="CHEBI:18420"/>
        <label>2</label>
    </ligand>
</feature>
<feature type="binding site" evidence="1">
    <location>
        <position position="196"/>
    </location>
    <ligand>
        <name>D-ribose 5-phosphate</name>
        <dbReference type="ChEBI" id="CHEBI:78346"/>
    </ligand>
</feature>
<feature type="binding site" evidence="1">
    <location>
        <position position="220"/>
    </location>
    <ligand>
        <name>D-ribose 5-phosphate</name>
        <dbReference type="ChEBI" id="CHEBI:78346"/>
    </ligand>
</feature>
<feature type="binding site" evidence="1">
    <location>
        <begin position="224"/>
        <end position="228"/>
    </location>
    <ligand>
        <name>D-ribose 5-phosphate</name>
        <dbReference type="ChEBI" id="CHEBI:78346"/>
    </ligand>
</feature>
<name>KPRS_VIBPA</name>
<dbReference type="EC" id="2.7.6.1" evidence="1"/>
<dbReference type="EMBL" id="BA000031">
    <property type="protein sequence ID" value="BAC59002.1"/>
    <property type="molecule type" value="Genomic_DNA"/>
</dbReference>
<dbReference type="RefSeq" id="NP_797118.1">
    <property type="nucleotide sequence ID" value="NC_004603.1"/>
</dbReference>
<dbReference type="RefSeq" id="WP_005496171.1">
    <property type="nucleotide sequence ID" value="NC_004603.1"/>
</dbReference>
<dbReference type="SMR" id="Q87RN8"/>
<dbReference type="GeneID" id="1188234"/>
<dbReference type="KEGG" id="vpa:VP0739"/>
<dbReference type="PATRIC" id="fig|223926.6.peg.706"/>
<dbReference type="eggNOG" id="COG0462">
    <property type="taxonomic scope" value="Bacteria"/>
</dbReference>
<dbReference type="HOGENOM" id="CLU_033546_2_0_6"/>
<dbReference type="UniPathway" id="UPA00087">
    <property type="reaction ID" value="UER00172"/>
</dbReference>
<dbReference type="Proteomes" id="UP000002493">
    <property type="component" value="Chromosome 1"/>
</dbReference>
<dbReference type="GO" id="GO:0005737">
    <property type="term" value="C:cytoplasm"/>
    <property type="evidence" value="ECO:0007669"/>
    <property type="project" value="UniProtKB-SubCell"/>
</dbReference>
<dbReference type="GO" id="GO:0002189">
    <property type="term" value="C:ribose phosphate diphosphokinase complex"/>
    <property type="evidence" value="ECO:0007669"/>
    <property type="project" value="TreeGrafter"/>
</dbReference>
<dbReference type="GO" id="GO:0005524">
    <property type="term" value="F:ATP binding"/>
    <property type="evidence" value="ECO:0007669"/>
    <property type="project" value="UniProtKB-KW"/>
</dbReference>
<dbReference type="GO" id="GO:0016301">
    <property type="term" value="F:kinase activity"/>
    <property type="evidence" value="ECO:0007669"/>
    <property type="project" value="UniProtKB-KW"/>
</dbReference>
<dbReference type="GO" id="GO:0000287">
    <property type="term" value="F:magnesium ion binding"/>
    <property type="evidence" value="ECO:0007669"/>
    <property type="project" value="UniProtKB-UniRule"/>
</dbReference>
<dbReference type="GO" id="GO:0004749">
    <property type="term" value="F:ribose phosphate diphosphokinase activity"/>
    <property type="evidence" value="ECO:0007669"/>
    <property type="project" value="UniProtKB-UniRule"/>
</dbReference>
<dbReference type="GO" id="GO:0006015">
    <property type="term" value="P:5-phosphoribose 1-diphosphate biosynthetic process"/>
    <property type="evidence" value="ECO:0007669"/>
    <property type="project" value="UniProtKB-UniRule"/>
</dbReference>
<dbReference type="GO" id="GO:0006164">
    <property type="term" value="P:purine nucleotide biosynthetic process"/>
    <property type="evidence" value="ECO:0007669"/>
    <property type="project" value="TreeGrafter"/>
</dbReference>
<dbReference type="GO" id="GO:0009156">
    <property type="term" value="P:ribonucleoside monophosphate biosynthetic process"/>
    <property type="evidence" value="ECO:0007669"/>
    <property type="project" value="InterPro"/>
</dbReference>
<dbReference type="CDD" id="cd06223">
    <property type="entry name" value="PRTases_typeI"/>
    <property type="match status" value="1"/>
</dbReference>
<dbReference type="FunFam" id="3.40.50.2020:FF:000001">
    <property type="entry name" value="Ribose-phosphate pyrophosphokinase"/>
    <property type="match status" value="1"/>
</dbReference>
<dbReference type="Gene3D" id="3.40.50.2020">
    <property type="match status" value="2"/>
</dbReference>
<dbReference type="HAMAP" id="MF_00583_B">
    <property type="entry name" value="RibP_PPkinase_B"/>
    <property type="match status" value="1"/>
</dbReference>
<dbReference type="InterPro" id="IPR000842">
    <property type="entry name" value="PRib_PP_synth_CS"/>
</dbReference>
<dbReference type="InterPro" id="IPR029099">
    <property type="entry name" value="Pribosyltran_N"/>
</dbReference>
<dbReference type="InterPro" id="IPR000836">
    <property type="entry name" value="PRibTrfase_dom"/>
</dbReference>
<dbReference type="InterPro" id="IPR029057">
    <property type="entry name" value="PRTase-like"/>
</dbReference>
<dbReference type="InterPro" id="IPR005946">
    <property type="entry name" value="Rib-P_diPkinase"/>
</dbReference>
<dbReference type="InterPro" id="IPR037515">
    <property type="entry name" value="Rib-P_diPkinase_bac"/>
</dbReference>
<dbReference type="NCBIfam" id="NF002320">
    <property type="entry name" value="PRK01259.1"/>
    <property type="match status" value="1"/>
</dbReference>
<dbReference type="NCBIfam" id="TIGR01251">
    <property type="entry name" value="ribP_PPkin"/>
    <property type="match status" value="1"/>
</dbReference>
<dbReference type="PANTHER" id="PTHR10210">
    <property type="entry name" value="RIBOSE-PHOSPHATE DIPHOSPHOKINASE FAMILY MEMBER"/>
    <property type="match status" value="1"/>
</dbReference>
<dbReference type="PANTHER" id="PTHR10210:SF41">
    <property type="entry name" value="RIBOSE-PHOSPHATE PYROPHOSPHOKINASE 1, CHLOROPLASTIC"/>
    <property type="match status" value="1"/>
</dbReference>
<dbReference type="Pfam" id="PF14572">
    <property type="entry name" value="Pribosyl_synth"/>
    <property type="match status" value="1"/>
</dbReference>
<dbReference type="Pfam" id="PF13793">
    <property type="entry name" value="Pribosyltran_N"/>
    <property type="match status" value="1"/>
</dbReference>
<dbReference type="SMART" id="SM01400">
    <property type="entry name" value="Pribosyltran_N"/>
    <property type="match status" value="1"/>
</dbReference>
<dbReference type="SUPFAM" id="SSF53271">
    <property type="entry name" value="PRTase-like"/>
    <property type="match status" value="1"/>
</dbReference>
<dbReference type="PROSITE" id="PS00114">
    <property type="entry name" value="PRPP_SYNTHASE"/>
    <property type="match status" value="1"/>
</dbReference>
<accession>Q87RN8</accession>
<proteinExistence type="inferred from homology"/>
<evidence type="ECO:0000255" key="1">
    <source>
        <dbReference type="HAMAP-Rule" id="MF_00583"/>
    </source>
</evidence>
<gene>
    <name evidence="1" type="primary">prs</name>
    <name type="ordered locus">VP0739</name>
</gene>
<comment type="function">
    <text evidence="1">Involved in the biosynthesis of the central metabolite phospho-alpha-D-ribosyl-1-pyrophosphate (PRPP) via the transfer of pyrophosphoryl group from ATP to 1-hydroxyl of ribose-5-phosphate (Rib-5-P).</text>
</comment>
<comment type="catalytic activity">
    <reaction evidence="1">
        <text>D-ribose 5-phosphate + ATP = 5-phospho-alpha-D-ribose 1-diphosphate + AMP + H(+)</text>
        <dbReference type="Rhea" id="RHEA:15609"/>
        <dbReference type="ChEBI" id="CHEBI:15378"/>
        <dbReference type="ChEBI" id="CHEBI:30616"/>
        <dbReference type="ChEBI" id="CHEBI:58017"/>
        <dbReference type="ChEBI" id="CHEBI:78346"/>
        <dbReference type="ChEBI" id="CHEBI:456215"/>
        <dbReference type="EC" id="2.7.6.1"/>
    </reaction>
</comment>
<comment type="cofactor">
    <cofactor evidence="1">
        <name>Mg(2+)</name>
        <dbReference type="ChEBI" id="CHEBI:18420"/>
    </cofactor>
    <text evidence="1">Binds 2 Mg(2+) ions per subunit.</text>
</comment>
<comment type="pathway">
    <text evidence="1">Metabolic intermediate biosynthesis; 5-phospho-alpha-D-ribose 1-diphosphate biosynthesis; 5-phospho-alpha-D-ribose 1-diphosphate from D-ribose 5-phosphate (route I): step 1/1.</text>
</comment>
<comment type="subunit">
    <text evidence="1">Homohexamer.</text>
</comment>
<comment type="subcellular location">
    <subcellularLocation>
        <location evidence="1">Cytoplasm</location>
    </subcellularLocation>
</comment>
<comment type="similarity">
    <text evidence="1">Belongs to the ribose-phosphate pyrophosphokinase family. Class I subfamily.</text>
</comment>